<sequence length="545" mass="62969">MTKVPATKKLQKITSKKALWLFSSADQLTQQASDKTAKNSKYIDKEIANLKKDLMRSRFLIQCVKIGRGYFNILREENAMKKKQQLLQKLKEEELNKFQPAKKFSDIHCRDNLLATYDCEKLKKLEAGIIIRPFTPIHSCLMAPSLPESHVDPLFRQLCALHWLLEALTIDHTHHTMRPLIACWNPKDPGGSKSTIKKINKDKSMGQRWDHFVTAPKTKKYKAPAIRTAMASRKPSRRGSTLSLTRTSGGSSPQSSMMSVNPGSDEPMGSKDIEDNESSSTKPEEEILHLYLQKLLEMVREDARRTILVESEIQKKAPSILSLVKQIKSEYGWKEWQTTHKSSERSSTTSAESHIQVIQKKSKSRVNRDIIYCKTGVCSNMRAKFFSVAQEAGFCLQDKMEILRKRQEERGLQKFHSFIVTSNFQKDITKMRHQVSIVKGDAEEIADHWYFDLLSKLPEDLKSFRPAKKILMKLQKFGENLDLRIRPHVLLKVLQDLRIWELCSPDIAVAIEFVREHIIHMPQEDYINWLQSRVNIPFRQRTILT</sequence>
<dbReference type="EMBL" id="AK082047">
    <property type="protein sequence ID" value="BAC38398.1"/>
    <property type="molecule type" value="mRNA"/>
</dbReference>
<dbReference type="EMBL" id="BC060151">
    <property type="protein sequence ID" value="AAH60151.1"/>
    <property type="molecule type" value="mRNA"/>
</dbReference>
<dbReference type="EMBL" id="BC075662">
    <property type="protein sequence ID" value="AAH75662.1"/>
    <property type="molecule type" value="mRNA"/>
</dbReference>
<dbReference type="EMBL" id="BC150892">
    <property type="protein sequence ID" value="AAI50893.1"/>
    <property type="molecule type" value="mRNA"/>
</dbReference>
<dbReference type="CCDS" id="CCDS19599.1">
    <molecule id="Q8C4J0-1"/>
</dbReference>
<dbReference type="RefSeq" id="NP_808427.1">
    <molecule id="Q8C4J0-1"/>
    <property type="nucleotide sequence ID" value="NM_177759.3"/>
</dbReference>
<dbReference type="SMR" id="Q8C4J0"/>
<dbReference type="FunCoup" id="Q8C4J0">
    <property type="interactions" value="79"/>
</dbReference>
<dbReference type="IntAct" id="Q8C4J0">
    <property type="interactions" value="1"/>
</dbReference>
<dbReference type="STRING" id="10090.ENSMUSP00000049912"/>
<dbReference type="iPTMnet" id="Q8C4J0"/>
<dbReference type="PhosphoSitePlus" id="Q8C4J0"/>
<dbReference type="PaxDb" id="10090-ENSMUSP00000049912"/>
<dbReference type="ProteomicsDB" id="281503">
    <molecule id="Q8C4J0-1"/>
</dbReference>
<dbReference type="ProteomicsDB" id="281504">
    <molecule id="Q8C4J0-2"/>
</dbReference>
<dbReference type="Antibodypedia" id="31402">
    <property type="antibodies" value="87 antibodies from 13 providers"/>
</dbReference>
<dbReference type="DNASU" id="269693"/>
<dbReference type="Ensembl" id="ENSMUST00000050178.13">
    <molecule id="Q8C4J0-1"/>
    <property type="protein sequence ID" value="ENSMUSP00000049912.7"/>
    <property type="gene ID" value="ENSMUSG00000043913.15"/>
</dbReference>
<dbReference type="GeneID" id="269693"/>
<dbReference type="KEGG" id="mmu:269693"/>
<dbReference type="UCSC" id="uc008zey.1">
    <molecule id="Q8C4J0-1"/>
    <property type="organism name" value="mouse"/>
</dbReference>
<dbReference type="AGR" id="MGI:2141043"/>
<dbReference type="CTD" id="160777"/>
<dbReference type="MGI" id="MGI:2141043">
    <property type="gene designation" value="Ccdc60"/>
</dbReference>
<dbReference type="VEuPathDB" id="HostDB:ENSMUSG00000043913"/>
<dbReference type="eggNOG" id="ENOG502QVFX">
    <property type="taxonomic scope" value="Eukaryota"/>
</dbReference>
<dbReference type="GeneTree" id="ENSGT00390000015428"/>
<dbReference type="HOGENOM" id="CLU_036722_0_0_1"/>
<dbReference type="InParanoid" id="Q8C4J0"/>
<dbReference type="OMA" id="RDIIHCK"/>
<dbReference type="OrthoDB" id="10017343at2759"/>
<dbReference type="PhylomeDB" id="Q8C4J0"/>
<dbReference type="TreeFam" id="TF336372"/>
<dbReference type="BioGRID-ORCS" id="269693">
    <property type="hits" value="2 hits in 76 CRISPR screens"/>
</dbReference>
<dbReference type="ChiTaRS" id="Ccdc60">
    <property type="organism name" value="mouse"/>
</dbReference>
<dbReference type="PRO" id="PR:Q8C4J0"/>
<dbReference type="Proteomes" id="UP000000589">
    <property type="component" value="Chromosome 5"/>
</dbReference>
<dbReference type="RNAct" id="Q8C4J0">
    <property type="molecule type" value="protein"/>
</dbReference>
<dbReference type="Bgee" id="ENSMUSG00000043913">
    <property type="expression patterns" value="Expressed in spermatid and 60 other cell types or tissues"/>
</dbReference>
<dbReference type="ExpressionAtlas" id="Q8C4J0">
    <property type="expression patterns" value="baseline and differential"/>
</dbReference>
<dbReference type="InterPro" id="IPR031526">
    <property type="entry name" value="DUF4698"/>
</dbReference>
<dbReference type="PANTHER" id="PTHR34754">
    <property type="entry name" value="COILED-COIL DOMAIN-CONTAINING PROTEIN 60"/>
    <property type="match status" value="1"/>
</dbReference>
<dbReference type="PANTHER" id="PTHR34754:SF1">
    <property type="entry name" value="COILED-COIL DOMAIN-CONTAINING PROTEIN 60"/>
    <property type="match status" value="1"/>
</dbReference>
<dbReference type="Pfam" id="PF15769">
    <property type="entry name" value="DUF4698"/>
    <property type="match status" value="1"/>
</dbReference>
<feature type="chain" id="PRO_0000239666" description="Coiled-coil domain-containing protein 60">
    <location>
        <begin position="1"/>
        <end position="545"/>
    </location>
</feature>
<feature type="region of interest" description="Disordered" evidence="2">
    <location>
        <begin position="224"/>
        <end position="284"/>
    </location>
</feature>
<feature type="coiled-coil region" evidence="1">
    <location>
        <begin position="72"/>
        <end position="99"/>
    </location>
</feature>
<feature type="compositionally biased region" description="Low complexity" evidence="2">
    <location>
        <begin position="238"/>
        <end position="259"/>
    </location>
</feature>
<feature type="splice variant" id="VSP_019251" description="In isoform 2." evidence="3">
    <original>DPGGSKSTIKKINKDKSMGQ</original>
    <variation>RKLIMQDPDWDENNDRPTL</variation>
    <location>
        <begin position="188"/>
        <end position="207"/>
    </location>
</feature>
<feature type="splice variant" id="VSP_019252" description="In isoform 2." evidence="3">
    <location>
        <begin position="208"/>
        <end position="545"/>
    </location>
</feature>
<comment type="alternative products">
    <event type="alternative splicing"/>
    <isoform>
        <id>Q8C4J0-1</id>
        <name>1</name>
        <sequence type="displayed"/>
    </isoform>
    <isoform>
        <id>Q8C4J0-2</id>
        <name>2</name>
        <sequence type="described" ref="VSP_019251 VSP_019252"/>
    </isoform>
</comment>
<accession>Q8C4J0</accession>
<accession>B2RX39</accession>
<accession>Q6DIA4</accession>
<accession>Q6PAQ3</accession>
<organism>
    <name type="scientific">Mus musculus</name>
    <name type="common">Mouse</name>
    <dbReference type="NCBI Taxonomy" id="10090"/>
    <lineage>
        <taxon>Eukaryota</taxon>
        <taxon>Metazoa</taxon>
        <taxon>Chordata</taxon>
        <taxon>Craniata</taxon>
        <taxon>Vertebrata</taxon>
        <taxon>Euteleostomi</taxon>
        <taxon>Mammalia</taxon>
        <taxon>Eutheria</taxon>
        <taxon>Euarchontoglires</taxon>
        <taxon>Glires</taxon>
        <taxon>Rodentia</taxon>
        <taxon>Myomorpha</taxon>
        <taxon>Muroidea</taxon>
        <taxon>Muridae</taxon>
        <taxon>Murinae</taxon>
        <taxon>Mus</taxon>
        <taxon>Mus</taxon>
    </lineage>
</organism>
<keyword id="KW-0025">Alternative splicing</keyword>
<keyword id="KW-0175">Coiled coil</keyword>
<keyword id="KW-1185">Reference proteome</keyword>
<proteinExistence type="evidence at transcript level"/>
<evidence type="ECO:0000255" key="1"/>
<evidence type="ECO:0000256" key="2">
    <source>
        <dbReference type="SAM" id="MobiDB-lite"/>
    </source>
</evidence>
<evidence type="ECO:0000303" key="3">
    <source>
    </source>
</evidence>
<protein>
    <recommendedName>
        <fullName>Coiled-coil domain-containing protein 60</fullName>
    </recommendedName>
</protein>
<reference key="1">
    <citation type="journal article" date="2005" name="Science">
        <title>The transcriptional landscape of the mammalian genome.</title>
        <authorList>
            <person name="Carninci P."/>
            <person name="Kasukawa T."/>
            <person name="Katayama S."/>
            <person name="Gough J."/>
            <person name="Frith M.C."/>
            <person name="Maeda N."/>
            <person name="Oyama R."/>
            <person name="Ravasi T."/>
            <person name="Lenhard B."/>
            <person name="Wells C."/>
            <person name="Kodzius R."/>
            <person name="Shimokawa K."/>
            <person name="Bajic V.B."/>
            <person name="Brenner S.E."/>
            <person name="Batalov S."/>
            <person name="Forrest A.R."/>
            <person name="Zavolan M."/>
            <person name="Davis M.J."/>
            <person name="Wilming L.G."/>
            <person name="Aidinis V."/>
            <person name="Allen J.E."/>
            <person name="Ambesi-Impiombato A."/>
            <person name="Apweiler R."/>
            <person name="Aturaliya R.N."/>
            <person name="Bailey T.L."/>
            <person name="Bansal M."/>
            <person name="Baxter L."/>
            <person name="Beisel K.W."/>
            <person name="Bersano T."/>
            <person name="Bono H."/>
            <person name="Chalk A.M."/>
            <person name="Chiu K.P."/>
            <person name="Choudhary V."/>
            <person name="Christoffels A."/>
            <person name="Clutterbuck D.R."/>
            <person name="Crowe M.L."/>
            <person name="Dalla E."/>
            <person name="Dalrymple B.P."/>
            <person name="de Bono B."/>
            <person name="Della Gatta G."/>
            <person name="di Bernardo D."/>
            <person name="Down T."/>
            <person name="Engstrom P."/>
            <person name="Fagiolini M."/>
            <person name="Faulkner G."/>
            <person name="Fletcher C.F."/>
            <person name="Fukushima T."/>
            <person name="Furuno M."/>
            <person name="Futaki S."/>
            <person name="Gariboldi M."/>
            <person name="Georgii-Hemming P."/>
            <person name="Gingeras T.R."/>
            <person name="Gojobori T."/>
            <person name="Green R.E."/>
            <person name="Gustincich S."/>
            <person name="Harbers M."/>
            <person name="Hayashi Y."/>
            <person name="Hensch T.K."/>
            <person name="Hirokawa N."/>
            <person name="Hill D."/>
            <person name="Huminiecki L."/>
            <person name="Iacono M."/>
            <person name="Ikeo K."/>
            <person name="Iwama A."/>
            <person name="Ishikawa T."/>
            <person name="Jakt M."/>
            <person name="Kanapin A."/>
            <person name="Katoh M."/>
            <person name="Kawasawa Y."/>
            <person name="Kelso J."/>
            <person name="Kitamura H."/>
            <person name="Kitano H."/>
            <person name="Kollias G."/>
            <person name="Krishnan S.P."/>
            <person name="Kruger A."/>
            <person name="Kummerfeld S.K."/>
            <person name="Kurochkin I.V."/>
            <person name="Lareau L.F."/>
            <person name="Lazarevic D."/>
            <person name="Lipovich L."/>
            <person name="Liu J."/>
            <person name="Liuni S."/>
            <person name="McWilliam S."/>
            <person name="Madan Babu M."/>
            <person name="Madera M."/>
            <person name="Marchionni L."/>
            <person name="Matsuda H."/>
            <person name="Matsuzawa S."/>
            <person name="Miki H."/>
            <person name="Mignone F."/>
            <person name="Miyake S."/>
            <person name="Morris K."/>
            <person name="Mottagui-Tabar S."/>
            <person name="Mulder N."/>
            <person name="Nakano N."/>
            <person name="Nakauchi H."/>
            <person name="Ng P."/>
            <person name="Nilsson R."/>
            <person name="Nishiguchi S."/>
            <person name="Nishikawa S."/>
            <person name="Nori F."/>
            <person name="Ohara O."/>
            <person name="Okazaki Y."/>
            <person name="Orlando V."/>
            <person name="Pang K.C."/>
            <person name="Pavan W.J."/>
            <person name="Pavesi G."/>
            <person name="Pesole G."/>
            <person name="Petrovsky N."/>
            <person name="Piazza S."/>
            <person name="Reed J."/>
            <person name="Reid J.F."/>
            <person name="Ring B.Z."/>
            <person name="Ringwald M."/>
            <person name="Rost B."/>
            <person name="Ruan Y."/>
            <person name="Salzberg S.L."/>
            <person name="Sandelin A."/>
            <person name="Schneider C."/>
            <person name="Schoenbach C."/>
            <person name="Sekiguchi K."/>
            <person name="Semple C.A."/>
            <person name="Seno S."/>
            <person name="Sessa L."/>
            <person name="Sheng Y."/>
            <person name="Shibata Y."/>
            <person name="Shimada H."/>
            <person name="Shimada K."/>
            <person name="Silva D."/>
            <person name="Sinclair B."/>
            <person name="Sperling S."/>
            <person name="Stupka E."/>
            <person name="Sugiura K."/>
            <person name="Sultana R."/>
            <person name="Takenaka Y."/>
            <person name="Taki K."/>
            <person name="Tammoja K."/>
            <person name="Tan S.L."/>
            <person name="Tang S."/>
            <person name="Taylor M.S."/>
            <person name="Tegner J."/>
            <person name="Teichmann S.A."/>
            <person name="Ueda H.R."/>
            <person name="van Nimwegen E."/>
            <person name="Verardo R."/>
            <person name="Wei C.L."/>
            <person name="Yagi K."/>
            <person name="Yamanishi H."/>
            <person name="Zabarovsky E."/>
            <person name="Zhu S."/>
            <person name="Zimmer A."/>
            <person name="Hide W."/>
            <person name="Bult C."/>
            <person name="Grimmond S.M."/>
            <person name="Teasdale R.D."/>
            <person name="Liu E.T."/>
            <person name="Brusic V."/>
            <person name="Quackenbush J."/>
            <person name="Wahlestedt C."/>
            <person name="Mattick J.S."/>
            <person name="Hume D.A."/>
            <person name="Kai C."/>
            <person name="Sasaki D."/>
            <person name="Tomaru Y."/>
            <person name="Fukuda S."/>
            <person name="Kanamori-Katayama M."/>
            <person name="Suzuki M."/>
            <person name="Aoki J."/>
            <person name="Arakawa T."/>
            <person name="Iida J."/>
            <person name="Imamura K."/>
            <person name="Itoh M."/>
            <person name="Kato T."/>
            <person name="Kawaji H."/>
            <person name="Kawagashira N."/>
            <person name="Kawashima T."/>
            <person name="Kojima M."/>
            <person name="Kondo S."/>
            <person name="Konno H."/>
            <person name="Nakano K."/>
            <person name="Ninomiya N."/>
            <person name="Nishio T."/>
            <person name="Okada M."/>
            <person name="Plessy C."/>
            <person name="Shibata K."/>
            <person name="Shiraki T."/>
            <person name="Suzuki S."/>
            <person name="Tagami M."/>
            <person name="Waki K."/>
            <person name="Watahiki A."/>
            <person name="Okamura-Oho Y."/>
            <person name="Suzuki H."/>
            <person name="Kawai J."/>
            <person name="Hayashizaki Y."/>
        </authorList>
    </citation>
    <scope>NUCLEOTIDE SEQUENCE [LARGE SCALE MRNA] (ISOFORM 1)</scope>
    <source>
        <strain>C57BL/6J</strain>
        <tissue>Head</tissue>
    </source>
</reference>
<reference key="2">
    <citation type="journal article" date="2004" name="Genome Res.">
        <title>The status, quality, and expansion of the NIH full-length cDNA project: the Mammalian Gene Collection (MGC).</title>
        <authorList>
            <consortium name="The MGC Project Team"/>
        </authorList>
    </citation>
    <scope>NUCLEOTIDE SEQUENCE [LARGE SCALE MRNA] (ISOFORMS 1 AND 2)</scope>
    <source>
        <strain>C57BL/6J</strain>
        <tissue>Brain</tissue>
        <tissue>Eye</tissue>
    </source>
</reference>
<gene>
    <name type="primary">Ccdc60</name>
</gene>
<name>CCD60_MOUSE</name>